<keyword id="KW-0997">Cell inner membrane</keyword>
<keyword id="KW-1003">Cell membrane</keyword>
<keyword id="KW-0472">Membrane</keyword>
<keyword id="KW-0769">Symport</keyword>
<keyword id="KW-0812">Transmembrane</keyword>
<keyword id="KW-1133">Transmembrane helix</keyword>
<keyword id="KW-0813">Transport</keyword>
<evidence type="ECO:0000250" key="1">
    <source>
        <dbReference type="UniProtKB" id="P33231"/>
    </source>
</evidence>
<evidence type="ECO:0000255" key="2"/>
<evidence type="ECO:0000305" key="3"/>
<comment type="function">
    <text evidence="1">Uptake of L-lactate across the membrane (By similarity). Can also transport D-lactate and glycolate (By similarity). Seems to be driven by a proton motive force (By similarity).</text>
</comment>
<comment type="catalytic activity">
    <reaction evidence="1">
        <text>(S)-lactate(in) + H(+)(in) = (S)-lactate(out) + H(+)(out)</text>
        <dbReference type="Rhea" id="RHEA:29415"/>
        <dbReference type="ChEBI" id="CHEBI:15378"/>
        <dbReference type="ChEBI" id="CHEBI:16651"/>
    </reaction>
    <physiologicalReaction direction="right-to-left" evidence="1">
        <dbReference type="Rhea" id="RHEA:29417"/>
    </physiologicalReaction>
</comment>
<comment type="catalytic activity">
    <reaction evidence="1">
        <text>(R)-lactate(in) + H(+)(in) = (R)-lactate(out) + H(+)(out)</text>
        <dbReference type="Rhea" id="RHEA:71791"/>
        <dbReference type="ChEBI" id="CHEBI:15378"/>
        <dbReference type="ChEBI" id="CHEBI:16004"/>
    </reaction>
    <physiologicalReaction direction="right-to-left" evidence="1">
        <dbReference type="Rhea" id="RHEA:71793"/>
    </physiologicalReaction>
</comment>
<comment type="catalytic activity">
    <reaction evidence="1">
        <text>glycolate(in) + H(+)(in) = glycolate(out) + H(+)(out)</text>
        <dbReference type="Rhea" id="RHEA:29411"/>
        <dbReference type="ChEBI" id="CHEBI:15378"/>
        <dbReference type="ChEBI" id="CHEBI:29805"/>
    </reaction>
    <physiologicalReaction direction="right-to-left" evidence="1">
        <dbReference type="Rhea" id="RHEA:29413"/>
    </physiologicalReaction>
</comment>
<comment type="subcellular location">
    <subcellularLocation>
        <location evidence="1">Cell inner membrane</location>
        <topology evidence="2">Multi-pass membrane protein</topology>
    </subcellularLocation>
</comment>
<comment type="similarity">
    <text evidence="3">Belongs to the lactate permease family.</text>
</comment>
<feature type="chain" id="PRO_0000210377" description="L-lactate permease">
    <location>
        <begin position="1"/>
        <end position="551"/>
    </location>
</feature>
<feature type="transmembrane region" description="Helical" evidence="2">
    <location>
        <begin position="13"/>
        <end position="33"/>
    </location>
</feature>
<feature type="transmembrane region" description="Helical" evidence="2">
    <location>
        <begin position="37"/>
        <end position="57"/>
    </location>
</feature>
<feature type="transmembrane region" description="Helical" evidence="2">
    <location>
        <begin position="69"/>
        <end position="89"/>
    </location>
</feature>
<feature type="transmembrane region" description="Helical" evidence="2">
    <location>
        <begin position="131"/>
        <end position="151"/>
    </location>
</feature>
<feature type="transmembrane region" description="Helical" evidence="2">
    <location>
        <begin position="159"/>
        <end position="179"/>
    </location>
</feature>
<feature type="transmembrane region" description="Helical" evidence="2">
    <location>
        <begin position="194"/>
        <end position="214"/>
    </location>
</feature>
<feature type="transmembrane region" description="Helical" evidence="2">
    <location>
        <begin position="245"/>
        <end position="265"/>
    </location>
</feature>
<feature type="transmembrane region" description="Helical" evidence="2">
    <location>
        <begin position="306"/>
        <end position="326"/>
    </location>
</feature>
<feature type="transmembrane region" description="Helical" evidence="2">
    <location>
        <begin position="366"/>
        <end position="386"/>
    </location>
</feature>
<feature type="transmembrane region" description="Helical" evidence="2">
    <location>
        <begin position="405"/>
        <end position="425"/>
    </location>
</feature>
<feature type="transmembrane region" description="Helical" evidence="2">
    <location>
        <begin position="438"/>
        <end position="458"/>
    </location>
</feature>
<feature type="transmembrane region" description="Helical" evidence="2">
    <location>
        <begin position="530"/>
        <end position="550"/>
    </location>
</feature>
<sequence>MNLWQQNYDPAGNIWLSSLIASLPILFFFFALIKLKLKGYVAASWTVVIALAVALLFYKMPVDHALASVVYGFFYGLWPIAWIIIAAVFVYKISVKTGQFDIIRSSILSITPDQRLQMLIVGFCFGAFLEGAAGFGAPVAITAALLVGLGFNPLYAAGLCLIVNTAPVAFGAMGIPILVAGQVTDLDSFEIGQMVGRQLPFLTIIVLFWIMAIMDGWRGVKETWPAVMVAGGSFAIAQYLSSNFIGPELPDIISSLVSLVCLTLFLKRWQPVRIFRFGDMGASQVDQTLARTRYTTGQIVRAWSPFLFLTATVTLWSIPPFKALFAPGGALYDWVINVPVPYLDKLVARMPPVVHEATAYAAVYKFDWFSATGTAILFAALLSIVWLKMKPSAAIQTFGSTLKELALPIYSIGMVLAFAFISNYSGLSSTLALALAHTGSAFTFFSPFLGWLGVFLTGSDTSSNALFASLQATAAQQIGVSDVLMVAANTTGGVTGKMISPQSIAIACAAVGLVGKESDLFRFTVKHSLIFTCMVGVITTLQAYVLTWMIP</sequence>
<protein>
    <recommendedName>
        <fullName evidence="1">L-lactate permease</fullName>
    </recommendedName>
</protein>
<proteinExistence type="inferred from homology"/>
<dbReference type="EMBL" id="AL513382">
    <property type="protein sequence ID" value="CAD03302.1"/>
    <property type="molecule type" value="Genomic_DNA"/>
</dbReference>
<dbReference type="EMBL" id="AE014613">
    <property type="protein sequence ID" value="AAO71308.1"/>
    <property type="molecule type" value="Genomic_DNA"/>
</dbReference>
<dbReference type="RefSeq" id="NP_458234.1">
    <property type="nucleotide sequence ID" value="NC_003198.1"/>
</dbReference>
<dbReference type="RefSeq" id="WP_001055299.1">
    <property type="nucleotide sequence ID" value="NZ_WSUR01000001.1"/>
</dbReference>
<dbReference type="STRING" id="220341.gene:17587946"/>
<dbReference type="KEGG" id="stt:t3827"/>
<dbReference type="KEGG" id="sty:STY4104"/>
<dbReference type="PATRIC" id="fig|220341.7.peg.4190"/>
<dbReference type="eggNOG" id="COG1620">
    <property type="taxonomic scope" value="Bacteria"/>
</dbReference>
<dbReference type="HOGENOM" id="CLU_021628_0_0_6"/>
<dbReference type="OMA" id="VIVLWIQ"/>
<dbReference type="OrthoDB" id="9761056at2"/>
<dbReference type="Proteomes" id="UP000000541">
    <property type="component" value="Chromosome"/>
</dbReference>
<dbReference type="Proteomes" id="UP000002670">
    <property type="component" value="Chromosome"/>
</dbReference>
<dbReference type="GO" id="GO:0005886">
    <property type="term" value="C:plasma membrane"/>
    <property type="evidence" value="ECO:0007669"/>
    <property type="project" value="UniProtKB-SubCell"/>
</dbReference>
<dbReference type="GO" id="GO:0015129">
    <property type="term" value="F:lactate transmembrane transporter activity"/>
    <property type="evidence" value="ECO:0007669"/>
    <property type="project" value="InterPro"/>
</dbReference>
<dbReference type="GO" id="GO:0015295">
    <property type="term" value="F:solute:proton symporter activity"/>
    <property type="evidence" value="ECO:0007669"/>
    <property type="project" value="TreeGrafter"/>
</dbReference>
<dbReference type="InterPro" id="IPR003804">
    <property type="entry name" value="Lactate_perm"/>
</dbReference>
<dbReference type="NCBIfam" id="TIGR00795">
    <property type="entry name" value="lctP"/>
    <property type="match status" value="1"/>
</dbReference>
<dbReference type="NCBIfam" id="NF007740">
    <property type="entry name" value="PRK10420.1"/>
    <property type="match status" value="1"/>
</dbReference>
<dbReference type="PANTHER" id="PTHR30003:SF0">
    <property type="entry name" value="GLYCOLATE PERMEASE GLCA-RELATED"/>
    <property type="match status" value="1"/>
</dbReference>
<dbReference type="PANTHER" id="PTHR30003">
    <property type="entry name" value="L-LACTATE PERMEASE"/>
    <property type="match status" value="1"/>
</dbReference>
<dbReference type="Pfam" id="PF02652">
    <property type="entry name" value="Lactate_perm"/>
    <property type="match status" value="1"/>
</dbReference>
<reference key="1">
    <citation type="journal article" date="2001" name="Nature">
        <title>Complete genome sequence of a multiple drug resistant Salmonella enterica serovar Typhi CT18.</title>
        <authorList>
            <person name="Parkhill J."/>
            <person name="Dougan G."/>
            <person name="James K.D."/>
            <person name="Thomson N.R."/>
            <person name="Pickard D."/>
            <person name="Wain J."/>
            <person name="Churcher C.M."/>
            <person name="Mungall K.L."/>
            <person name="Bentley S.D."/>
            <person name="Holden M.T.G."/>
            <person name="Sebaihia M."/>
            <person name="Baker S."/>
            <person name="Basham D."/>
            <person name="Brooks K."/>
            <person name="Chillingworth T."/>
            <person name="Connerton P."/>
            <person name="Cronin A."/>
            <person name="Davis P."/>
            <person name="Davies R.M."/>
            <person name="Dowd L."/>
            <person name="White N."/>
            <person name="Farrar J."/>
            <person name="Feltwell T."/>
            <person name="Hamlin N."/>
            <person name="Haque A."/>
            <person name="Hien T.T."/>
            <person name="Holroyd S."/>
            <person name="Jagels K."/>
            <person name="Krogh A."/>
            <person name="Larsen T.S."/>
            <person name="Leather S."/>
            <person name="Moule S."/>
            <person name="O'Gaora P."/>
            <person name="Parry C."/>
            <person name="Quail M.A."/>
            <person name="Rutherford K.M."/>
            <person name="Simmonds M."/>
            <person name="Skelton J."/>
            <person name="Stevens K."/>
            <person name="Whitehead S."/>
            <person name="Barrell B.G."/>
        </authorList>
    </citation>
    <scope>NUCLEOTIDE SEQUENCE [LARGE SCALE GENOMIC DNA]</scope>
    <source>
        <strain>CT18</strain>
    </source>
</reference>
<reference key="2">
    <citation type="journal article" date="2003" name="J. Bacteriol.">
        <title>Comparative genomics of Salmonella enterica serovar Typhi strains Ty2 and CT18.</title>
        <authorList>
            <person name="Deng W."/>
            <person name="Liou S.-R."/>
            <person name="Plunkett G. III"/>
            <person name="Mayhew G.F."/>
            <person name="Rose D.J."/>
            <person name="Burland V."/>
            <person name="Kodoyianni V."/>
            <person name="Schwartz D.C."/>
            <person name="Blattner F.R."/>
        </authorList>
    </citation>
    <scope>NUCLEOTIDE SEQUENCE [LARGE SCALE GENOMIC DNA]</scope>
    <source>
        <strain>ATCC 700931 / Ty2</strain>
    </source>
</reference>
<accession>Q8Z2E3</accession>
<name>LLDP_SALTI</name>
<gene>
    <name type="primary">lldP</name>
    <name type="synonym">lctP</name>
    <name type="ordered locus">STY4104</name>
    <name type="ordered locus">t3827</name>
</gene>
<organism>
    <name type="scientific">Salmonella typhi</name>
    <dbReference type="NCBI Taxonomy" id="90370"/>
    <lineage>
        <taxon>Bacteria</taxon>
        <taxon>Pseudomonadati</taxon>
        <taxon>Pseudomonadota</taxon>
        <taxon>Gammaproteobacteria</taxon>
        <taxon>Enterobacterales</taxon>
        <taxon>Enterobacteriaceae</taxon>
        <taxon>Salmonella</taxon>
    </lineage>
</organism>